<organism>
    <name type="scientific">Escherichia coli (strain K12 / MC4100 / BW2952)</name>
    <dbReference type="NCBI Taxonomy" id="595496"/>
    <lineage>
        <taxon>Bacteria</taxon>
        <taxon>Pseudomonadati</taxon>
        <taxon>Pseudomonadota</taxon>
        <taxon>Gammaproteobacteria</taxon>
        <taxon>Enterobacterales</taxon>
        <taxon>Enterobacteriaceae</taxon>
        <taxon>Escherichia</taxon>
    </lineage>
</organism>
<accession>C4ZYC2</accession>
<proteinExistence type="inferred from homology"/>
<dbReference type="EMBL" id="CP001396">
    <property type="protein sequence ID" value="ACR62987.1"/>
    <property type="molecule type" value="Genomic_DNA"/>
</dbReference>
<dbReference type="RefSeq" id="WP_000190982.1">
    <property type="nucleotide sequence ID" value="NC_012759.1"/>
</dbReference>
<dbReference type="SMR" id="C4ZYC2"/>
<dbReference type="GeneID" id="75204504"/>
<dbReference type="KEGG" id="ebw:BWG_1474"/>
<dbReference type="HOGENOM" id="CLU_037628_6_2_6"/>
<dbReference type="UniPathway" id="UPA00488"/>
<dbReference type="GO" id="GO:0003700">
    <property type="term" value="F:DNA-binding transcription factor activity"/>
    <property type="evidence" value="ECO:0007669"/>
    <property type="project" value="TreeGrafter"/>
</dbReference>
<dbReference type="GO" id="GO:0000976">
    <property type="term" value="F:transcription cis-regulatory region binding"/>
    <property type="evidence" value="ECO:0007669"/>
    <property type="project" value="TreeGrafter"/>
</dbReference>
<dbReference type="GO" id="GO:0045892">
    <property type="term" value="P:negative regulation of DNA-templated transcription"/>
    <property type="evidence" value="ECO:0007669"/>
    <property type="project" value="UniProtKB-UniRule"/>
</dbReference>
<dbReference type="GO" id="GO:0006164">
    <property type="term" value="P:purine nucleotide biosynthetic process"/>
    <property type="evidence" value="ECO:0007669"/>
    <property type="project" value="UniProtKB-UniPathway"/>
</dbReference>
<dbReference type="CDD" id="cd01392">
    <property type="entry name" value="HTH_LacI"/>
    <property type="match status" value="1"/>
</dbReference>
<dbReference type="CDD" id="cd06275">
    <property type="entry name" value="PBP1_PurR"/>
    <property type="match status" value="1"/>
</dbReference>
<dbReference type="FunFam" id="1.10.260.40:FF:000002">
    <property type="entry name" value="HTH-type transcriptional repressor PurR"/>
    <property type="match status" value="1"/>
</dbReference>
<dbReference type="FunFam" id="3.40.50.2300:FF:000045">
    <property type="entry name" value="HTH-type transcriptional repressor PurR"/>
    <property type="match status" value="1"/>
</dbReference>
<dbReference type="Gene3D" id="3.40.50.2300">
    <property type="match status" value="2"/>
</dbReference>
<dbReference type="Gene3D" id="1.10.260.40">
    <property type="entry name" value="lambda repressor-like DNA-binding domains"/>
    <property type="match status" value="1"/>
</dbReference>
<dbReference type="HAMAP" id="MF_01277">
    <property type="entry name" value="HTH_type_PurR"/>
    <property type="match status" value="1"/>
</dbReference>
<dbReference type="InterPro" id="IPR000843">
    <property type="entry name" value="HTH_LacI"/>
</dbReference>
<dbReference type="InterPro" id="IPR046335">
    <property type="entry name" value="LacI/GalR-like_sensor"/>
</dbReference>
<dbReference type="InterPro" id="IPR010982">
    <property type="entry name" value="Lambda_DNA-bd_dom_sf"/>
</dbReference>
<dbReference type="InterPro" id="IPR028082">
    <property type="entry name" value="Peripla_BP_I"/>
</dbReference>
<dbReference type="InterPro" id="IPR023588">
    <property type="entry name" value="Tscrpt_reg_HTH_PurR"/>
</dbReference>
<dbReference type="NCBIfam" id="NF007979">
    <property type="entry name" value="PRK10703.1"/>
    <property type="match status" value="1"/>
</dbReference>
<dbReference type="PANTHER" id="PTHR30146:SF148">
    <property type="entry name" value="HTH-TYPE TRANSCRIPTIONAL REPRESSOR PURR-RELATED"/>
    <property type="match status" value="1"/>
</dbReference>
<dbReference type="PANTHER" id="PTHR30146">
    <property type="entry name" value="LACI-RELATED TRANSCRIPTIONAL REPRESSOR"/>
    <property type="match status" value="1"/>
</dbReference>
<dbReference type="Pfam" id="PF00356">
    <property type="entry name" value="LacI"/>
    <property type="match status" value="1"/>
</dbReference>
<dbReference type="Pfam" id="PF13377">
    <property type="entry name" value="Peripla_BP_3"/>
    <property type="match status" value="1"/>
</dbReference>
<dbReference type="PRINTS" id="PR00036">
    <property type="entry name" value="HTHLACI"/>
</dbReference>
<dbReference type="SMART" id="SM00354">
    <property type="entry name" value="HTH_LACI"/>
    <property type="match status" value="1"/>
</dbReference>
<dbReference type="SUPFAM" id="SSF47413">
    <property type="entry name" value="lambda repressor-like DNA-binding domains"/>
    <property type="match status" value="1"/>
</dbReference>
<dbReference type="SUPFAM" id="SSF53822">
    <property type="entry name" value="Periplasmic binding protein-like I"/>
    <property type="match status" value="1"/>
</dbReference>
<dbReference type="PROSITE" id="PS00356">
    <property type="entry name" value="HTH_LACI_1"/>
    <property type="match status" value="1"/>
</dbReference>
<dbReference type="PROSITE" id="PS50932">
    <property type="entry name" value="HTH_LACI_2"/>
    <property type="match status" value="1"/>
</dbReference>
<sequence length="341" mass="38175">MATIKDVAKRANVSTTTVSHVINKTRFVAEETRNAVWAAIKELHYSPSAVARSLKVNHTKSIGLLATSSEAAYFAEIIEAVEKNCFQKGYTLILGNAWNNLEKQRAYLSMMAQKRVDGLLVMCSEYPEPLLAMLEEYRHIPMVVMDWGEAKADFTDAVIDNAFEGGYMAGRYLIERGHREIGVIPGPLERNTGAGRLAGFMKAMEEAMIKVPESWIVQGDFEPESGYRAMQQILSQPHRPTAVFCGGDIMAMGALCAADEMGLRVPQDVSLIGYDNVRNARYFTPALTTIHQPKDSLGETAFNMLLDRIVNKREEPQSIEVHPRLIERRSVADGPFRDYRR</sequence>
<keyword id="KW-0238">DNA-binding</keyword>
<keyword id="KW-0658">Purine biosynthesis</keyword>
<keyword id="KW-0678">Repressor</keyword>
<keyword id="KW-0804">Transcription</keyword>
<keyword id="KW-0805">Transcription regulation</keyword>
<gene>
    <name evidence="1" type="primary">purR</name>
    <name type="ordered locus">BWG_1474</name>
</gene>
<feature type="chain" id="PRO_1000214199" description="HTH-type transcriptional repressor PurR">
    <location>
        <begin position="1"/>
        <end position="341"/>
    </location>
</feature>
<feature type="domain" description="HTH lacI-type" evidence="1">
    <location>
        <begin position="2"/>
        <end position="56"/>
    </location>
</feature>
<feature type="DNA-binding region" description="H-T-H motif" evidence="1">
    <location>
        <begin position="4"/>
        <end position="23"/>
    </location>
</feature>
<feature type="DNA-binding region" evidence="1">
    <location>
        <begin position="48"/>
        <end position="56"/>
    </location>
</feature>
<feature type="binding site" evidence="1">
    <location>
        <position position="73"/>
    </location>
    <ligand>
        <name>hypoxanthine</name>
        <dbReference type="ChEBI" id="CHEBI:17368"/>
    </ligand>
</feature>
<feature type="binding site" evidence="1">
    <location>
        <position position="190"/>
    </location>
    <ligand>
        <name>hypoxanthine</name>
        <dbReference type="ChEBI" id="CHEBI:17368"/>
    </ligand>
</feature>
<feature type="binding site" evidence="1">
    <location>
        <position position="192"/>
    </location>
    <ligand>
        <name>hypoxanthine</name>
        <dbReference type="ChEBI" id="CHEBI:17368"/>
    </ligand>
</feature>
<feature type="binding site" evidence="1">
    <location>
        <position position="221"/>
    </location>
    <ligand>
        <name>hypoxanthine</name>
        <dbReference type="ChEBI" id="CHEBI:17368"/>
    </ligand>
</feature>
<feature type="binding site" evidence="1">
    <location>
        <position position="275"/>
    </location>
    <ligand>
        <name>hypoxanthine</name>
        <dbReference type="ChEBI" id="CHEBI:17368"/>
    </ligand>
</feature>
<reference key="1">
    <citation type="journal article" date="2009" name="J. Bacteriol.">
        <title>Genomic sequencing reveals regulatory mutations and recombinational events in the widely used MC4100 lineage of Escherichia coli K-12.</title>
        <authorList>
            <person name="Ferenci T."/>
            <person name="Zhou Z."/>
            <person name="Betteridge T."/>
            <person name="Ren Y."/>
            <person name="Liu Y."/>
            <person name="Feng L."/>
            <person name="Reeves P.R."/>
            <person name="Wang L."/>
        </authorList>
    </citation>
    <scope>NUCLEOTIDE SEQUENCE [LARGE SCALE GENOMIC DNA]</scope>
    <source>
        <strain>K12 / MC4100 / BW2952</strain>
    </source>
</reference>
<comment type="function">
    <text evidence="1">Is the main repressor of the genes involved in the de novo synthesis of purine nucleotides, regulating purB, purC, purEK, purF, purHD, purL, purMN and guaBA expression. PurR is allosterically activated to bind its cognate DNA by binding the purine corepressors, hypoxanthine or guanine, thereby effecting transcription repression.</text>
</comment>
<comment type="pathway">
    <text>Purine metabolism; purine nucleotide biosynthesis [regulation].</text>
</comment>
<comment type="subunit">
    <text evidence="1">Homodimer.</text>
</comment>
<comment type="domain">
    <text evidence="1">Consists of two structural and functional domains: an N-terminal DNA-binding domain, approximately the first 60 residues, and a larger C-terminal domain, approximately 280 residues, which imparts the function of corepressor binding and oligomerization.</text>
</comment>
<name>PURR_ECOBW</name>
<protein>
    <recommendedName>
        <fullName evidence="1">HTH-type transcriptional repressor PurR</fullName>
    </recommendedName>
    <alternativeName>
        <fullName evidence="1">Pur regulon repressor</fullName>
    </alternativeName>
    <alternativeName>
        <fullName evidence="1">Purine nucleotide synthesis repressor</fullName>
    </alternativeName>
</protein>
<evidence type="ECO:0000255" key="1">
    <source>
        <dbReference type="HAMAP-Rule" id="MF_01277"/>
    </source>
</evidence>